<keyword id="KW-0378">Hydrolase</keyword>
<keyword id="KW-0479">Metal-binding</keyword>
<keyword id="KW-0482">Metalloprotease</keyword>
<keyword id="KW-0645">Protease</keyword>
<keyword id="KW-1185">Reference proteome</keyword>
<keyword id="KW-0862">Zinc</keyword>
<reference key="1">
    <citation type="journal article" date="2001" name="DNA Res.">
        <title>Complete genomic sequence of the filamentous nitrogen-fixing cyanobacterium Anabaena sp. strain PCC 7120.</title>
        <authorList>
            <person name="Kaneko T."/>
            <person name="Nakamura Y."/>
            <person name="Wolk C.P."/>
            <person name="Kuritz T."/>
            <person name="Sasamoto S."/>
            <person name="Watanabe A."/>
            <person name="Iriguchi M."/>
            <person name="Ishikawa A."/>
            <person name="Kawashima K."/>
            <person name="Kimura T."/>
            <person name="Kishida Y."/>
            <person name="Kohara M."/>
            <person name="Matsumoto M."/>
            <person name="Matsuno A."/>
            <person name="Muraki A."/>
            <person name="Nakazaki N."/>
            <person name="Shimpo S."/>
            <person name="Sugimoto M."/>
            <person name="Takazawa M."/>
            <person name="Yamada M."/>
            <person name="Yasuda M."/>
            <person name="Tabata S."/>
        </authorList>
    </citation>
    <scope>NUCLEOTIDE SEQUENCE [LARGE SCALE GENOMIC DNA]</scope>
    <source>
        <strain>PCC 7120 / SAG 25.82 / UTEX 2576</strain>
    </source>
</reference>
<proteinExistence type="inferred from homology"/>
<comment type="similarity">
    <text evidence="2">Belongs to the UPF0758 family.</text>
</comment>
<organism>
    <name type="scientific">Nostoc sp. (strain PCC 7120 / SAG 25.82 / UTEX 2576)</name>
    <dbReference type="NCBI Taxonomy" id="103690"/>
    <lineage>
        <taxon>Bacteria</taxon>
        <taxon>Bacillati</taxon>
        <taxon>Cyanobacteriota</taxon>
        <taxon>Cyanophyceae</taxon>
        <taxon>Nostocales</taxon>
        <taxon>Nostocaceae</taxon>
        <taxon>Nostoc</taxon>
    </lineage>
</organism>
<name>Y2351_NOSS1</name>
<evidence type="ECO:0000255" key="1">
    <source>
        <dbReference type="PROSITE-ProRule" id="PRU01182"/>
    </source>
</evidence>
<evidence type="ECO:0000305" key="2"/>
<sequence>MTYCLRIADIPTNERPRERLMTHGPKVLATAELIAILLGTGQGPGKLSAVGLGQYLLQELGKNQRDPLAVLREVTPAELMQIPGIGPAKATSILAAVELGKRTFQFRPLDKTPIDSPVAAVAALSQDLMWQNQERFAVLLLDVKNRLLGTQVITIGTATETLASPREIFREIIRQGATRTIVAHNHPSGNVEPSPEDIELTRQLLAGAQLLGIPLLDHLILGNGNHQSLREITTLWNDYPQGD</sequence>
<feature type="chain" id="PRO_0000190676" description="UPF0758 protein alr2351">
    <location>
        <begin position="1"/>
        <end position="243"/>
    </location>
</feature>
<feature type="domain" description="MPN" evidence="1">
    <location>
        <begin position="113"/>
        <end position="235"/>
    </location>
</feature>
<feature type="short sequence motif" description="JAMM motif" evidence="1">
    <location>
        <begin position="184"/>
        <end position="197"/>
    </location>
</feature>
<feature type="binding site" evidence="1">
    <location>
        <position position="184"/>
    </location>
    <ligand>
        <name>Zn(2+)</name>
        <dbReference type="ChEBI" id="CHEBI:29105"/>
        <note>catalytic</note>
    </ligand>
</feature>
<feature type="binding site" evidence="1">
    <location>
        <position position="186"/>
    </location>
    <ligand>
        <name>Zn(2+)</name>
        <dbReference type="ChEBI" id="CHEBI:29105"/>
        <note>catalytic</note>
    </ligand>
</feature>
<feature type="binding site" evidence="1">
    <location>
        <position position="197"/>
    </location>
    <ligand>
        <name>Zn(2+)</name>
        <dbReference type="ChEBI" id="CHEBI:29105"/>
        <note>catalytic</note>
    </ligand>
</feature>
<protein>
    <recommendedName>
        <fullName>UPF0758 protein alr2351</fullName>
    </recommendedName>
</protein>
<dbReference type="EMBL" id="BA000019">
    <property type="protein sequence ID" value="BAB74050.1"/>
    <property type="molecule type" value="Genomic_DNA"/>
</dbReference>
<dbReference type="PIR" id="AH2099">
    <property type="entry name" value="AH2099"/>
</dbReference>
<dbReference type="SMR" id="Q8YUJ5"/>
<dbReference type="STRING" id="103690.gene:10494380"/>
<dbReference type="KEGG" id="ana:alr2351"/>
<dbReference type="eggNOG" id="COG2003">
    <property type="taxonomic scope" value="Bacteria"/>
</dbReference>
<dbReference type="OrthoDB" id="9804482at2"/>
<dbReference type="Proteomes" id="UP000002483">
    <property type="component" value="Chromosome"/>
</dbReference>
<dbReference type="GO" id="GO:0003677">
    <property type="term" value="F:DNA binding"/>
    <property type="evidence" value="ECO:0007669"/>
    <property type="project" value="InterPro"/>
</dbReference>
<dbReference type="GO" id="GO:0046872">
    <property type="term" value="F:metal ion binding"/>
    <property type="evidence" value="ECO:0007669"/>
    <property type="project" value="UniProtKB-KW"/>
</dbReference>
<dbReference type="GO" id="GO:0008237">
    <property type="term" value="F:metallopeptidase activity"/>
    <property type="evidence" value="ECO:0007669"/>
    <property type="project" value="UniProtKB-KW"/>
</dbReference>
<dbReference type="GO" id="GO:0006281">
    <property type="term" value="P:DNA repair"/>
    <property type="evidence" value="ECO:0007669"/>
    <property type="project" value="InterPro"/>
</dbReference>
<dbReference type="GO" id="GO:0006508">
    <property type="term" value="P:proteolysis"/>
    <property type="evidence" value="ECO:0007669"/>
    <property type="project" value="UniProtKB-KW"/>
</dbReference>
<dbReference type="CDD" id="cd08071">
    <property type="entry name" value="MPN_DUF2466"/>
    <property type="match status" value="1"/>
</dbReference>
<dbReference type="Gene3D" id="3.40.140.10">
    <property type="entry name" value="Cytidine Deaminase, domain 2"/>
    <property type="match status" value="1"/>
</dbReference>
<dbReference type="InterPro" id="IPR003583">
    <property type="entry name" value="Hlx-hairpin-Hlx_DNA-bd_motif"/>
</dbReference>
<dbReference type="InterPro" id="IPR037518">
    <property type="entry name" value="MPN"/>
</dbReference>
<dbReference type="InterPro" id="IPR025657">
    <property type="entry name" value="RadC_JAB"/>
</dbReference>
<dbReference type="InterPro" id="IPR001405">
    <property type="entry name" value="UPF0758"/>
</dbReference>
<dbReference type="InterPro" id="IPR020891">
    <property type="entry name" value="UPF0758_CS"/>
</dbReference>
<dbReference type="InterPro" id="IPR046778">
    <property type="entry name" value="UPF0758_N"/>
</dbReference>
<dbReference type="NCBIfam" id="NF000642">
    <property type="entry name" value="PRK00024.1"/>
    <property type="match status" value="1"/>
</dbReference>
<dbReference type="NCBIfam" id="TIGR00608">
    <property type="entry name" value="radc"/>
    <property type="match status" value="1"/>
</dbReference>
<dbReference type="PANTHER" id="PTHR30471">
    <property type="entry name" value="DNA REPAIR PROTEIN RADC"/>
    <property type="match status" value="1"/>
</dbReference>
<dbReference type="PANTHER" id="PTHR30471:SF3">
    <property type="entry name" value="UPF0758 PROTEIN YEES-RELATED"/>
    <property type="match status" value="1"/>
</dbReference>
<dbReference type="Pfam" id="PF04002">
    <property type="entry name" value="RadC"/>
    <property type="match status" value="1"/>
</dbReference>
<dbReference type="Pfam" id="PF20582">
    <property type="entry name" value="UPF0758_N"/>
    <property type="match status" value="1"/>
</dbReference>
<dbReference type="SMART" id="SM00278">
    <property type="entry name" value="HhH1"/>
    <property type="match status" value="1"/>
</dbReference>
<dbReference type="PROSITE" id="PS50249">
    <property type="entry name" value="MPN"/>
    <property type="match status" value="1"/>
</dbReference>
<dbReference type="PROSITE" id="PS01302">
    <property type="entry name" value="UPF0758"/>
    <property type="match status" value="1"/>
</dbReference>
<gene>
    <name type="ordered locus">alr2351</name>
</gene>
<accession>Q8YUJ5</accession>